<reference key="1">
    <citation type="journal article" date="2011" name="PLoS Genet.">
        <title>The evolution of host specialization in the vertebrate gut symbiont Lactobacillus reuteri.</title>
        <authorList>
            <person name="Frese S.A."/>
            <person name="Benson A.K."/>
            <person name="Tannock G.W."/>
            <person name="Loach D.M."/>
            <person name="Kim J."/>
            <person name="Zhang M."/>
            <person name="Oh P.L."/>
            <person name="Heng N.C."/>
            <person name="Patil P.B."/>
            <person name="Juge N."/>
            <person name="Mackenzie D.A."/>
            <person name="Pearson B.M."/>
            <person name="Lapidus A."/>
            <person name="Dalin E."/>
            <person name="Tice H."/>
            <person name="Goltsman E."/>
            <person name="Land M."/>
            <person name="Hauser L."/>
            <person name="Ivanova N."/>
            <person name="Kyrpides N.C."/>
            <person name="Walter J."/>
        </authorList>
    </citation>
    <scope>NUCLEOTIDE SEQUENCE [LARGE SCALE GENOMIC DNA]</scope>
    <source>
        <strain>DSM 20016</strain>
    </source>
</reference>
<organism>
    <name type="scientific">Limosilactobacillus reuteri (strain DSM 20016)</name>
    <name type="common">Lactobacillus reuteri</name>
    <dbReference type="NCBI Taxonomy" id="557436"/>
    <lineage>
        <taxon>Bacteria</taxon>
        <taxon>Bacillati</taxon>
        <taxon>Bacillota</taxon>
        <taxon>Bacilli</taxon>
        <taxon>Lactobacillales</taxon>
        <taxon>Lactobacillaceae</taxon>
        <taxon>Limosilactobacillus</taxon>
    </lineage>
</organism>
<feature type="chain" id="PRO_1000058454" description="Glycerol kinase">
    <location>
        <begin position="1"/>
        <end position="500"/>
    </location>
</feature>
<feature type="binding site" evidence="1">
    <location>
        <position position="14"/>
    </location>
    <ligand>
        <name>ADP</name>
        <dbReference type="ChEBI" id="CHEBI:456216"/>
    </ligand>
</feature>
<feature type="binding site" evidence="1">
    <location>
        <position position="14"/>
    </location>
    <ligand>
        <name>ATP</name>
        <dbReference type="ChEBI" id="CHEBI:30616"/>
    </ligand>
</feature>
<feature type="binding site" evidence="1">
    <location>
        <position position="14"/>
    </location>
    <ligand>
        <name>sn-glycerol 3-phosphate</name>
        <dbReference type="ChEBI" id="CHEBI:57597"/>
    </ligand>
</feature>
<feature type="binding site" evidence="1">
    <location>
        <position position="15"/>
    </location>
    <ligand>
        <name>ATP</name>
        <dbReference type="ChEBI" id="CHEBI:30616"/>
    </ligand>
</feature>
<feature type="binding site" evidence="1">
    <location>
        <position position="16"/>
    </location>
    <ligand>
        <name>ATP</name>
        <dbReference type="ChEBI" id="CHEBI:30616"/>
    </ligand>
</feature>
<feature type="binding site" evidence="1">
    <location>
        <position position="18"/>
    </location>
    <ligand>
        <name>ADP</name>
        <dbReference type="ChEBI" id="CHEBI:456216"/>
    </ligand>
</feature>
<feature type="binding site" evidence="1">
    <location>
        <position position="84"/>
    </location>
    <ligand>
        <name>glycerol</name>
        <dbReference type="ChEBI" id="CHEBI:17754"/>
    </ligand>
</feature>
<feature type="binding site" evidence="1">
    <location>
        <position position="84"/>
    </location>
    <ligand>
        <name>sn-glycerol 3-phosphate</name>
        <dbReference type="ChEBI" id="CHEBI:57597"/>
    </ligand>
</feature>
<feature type="binding site" evidence="1">
    <location>
        <position position="85"/>
    </location>
    <ligand>
        <name>glycerol</name>
        <dbReference type="ChEBI" id="CHEBI:17754"/>
    </ligand>
</feature>
<feature type="binding site" evidence="1">
    <location>
        <position position="85"/>
    </location>
    <ligand>
        <name>sn-glycerol 3-phosphate</name>
        <dbReference type="ChEBI" id="CHEBI:57597"/>
    </ligand>
</feature>
<feature type="binding site" evidence="1">
    <location>
        <position position="136"/>
    </location>
    <ligand>
        <name>glycerol</name>
        <dbReference type="ChEBI" id="CHEBI:17754"/>
    </ligand>
</feature>
<feature type="binding site" evidence="1">
    <location>
        <position position="136"/>
    </location>
    <ligand>
        <name>sn-glycerol 3-phosphate</name>
        <dbReference type="ChEBI" id="CHEBI:57597"/>
    </ligand>
</feature>
<feature type="binding site" evidence="1">
    <location>
        <position position="246"/>
    </location>
    <ligand>
        <name>glycerol</name>
        <dbReference type="ChEBI" id="CHEBI:17754"/>
    </ligand>
</feature>
<feature type="binding site" evidence="1">
    <location>
        <position position="246"/>
    </location>
    <ligand>
        <name>sn-glycerol 3-phosphate</name>
        <dbReference type="ChEBI" id="CHEBI:57597"/>
    </ligand>
</feature>
<feature type="binding site" evidence="1">
    <location>
        <position position="247"/>
    </location>
    <ligand>
        <name>glycerol</name>
        <dbReference type="ChEBI" id="CHEBI:17754"/>
    </ligand>
</feature>
<feature type="binding site" evidence="1">
    <location>
        <position position="268"/>
    </location>
    <ligand>
        <name>ADP</name>
        <dbReference type="ChEBI" id="CHEBI:456216"/>
    </ligand>
</feature>
<feature type="binding site" evidence="1">
    <location>
        <position position="268"/>
    </location>
    <ligand>
        <name>ATP</name>
        <dbReference type="ChEBI" id="CHEBI:30616"/>
    </ligand>
</feature>
<feature type="binding site" evidence="1">
    <location>
        <position position="311"/>
    </location>
    <ligand>
        <name>ADP</name>
        <dbReference type="ChEBI" id="CHEBI:456216"/>
    </ligand>
</feature>
<feature type="binding site" evidence="1">
    <location>
        <position position="311"/>
    </location>
    <ligand>
        <name>ATP</name>
        <dbReference type="ChEBI" id="CHEBI:30616"/>
    </ligand>
</feature>
<feature type="binding site" evidence="1">
    <location>
        <position position="315"/>
    </location>
    <ligand>
        <name>ATP</name>
        <dbReference type="ChEBI" id="CHEBI:30616"/>
    </ligand>
</feature>
<feature type="binding site" evidence="1">
    <location>
        <position position="412"/>
    </location>
    <ligand>
        <name>ADP</name>
        <dbReference type="ChEBI" id="CHEBI:456216"/>
    </ligand>
</feature>
<feature type="binding site" evidence="1">
    <location>
        <position position="412"/>
    </location>
    <ligand>
        <name>ATP</name>
        <dbReference type="ChEBI" id="CHEBI:30616"/>
    </ligand>
</feature>
<feature type="binding site" evidence="1">
    <location>
        <position position="416"/>
    </location>
    <ligand>
        <name>ADP</name>
        <dbReference type="ChEBI" id="CHEBI:456216"/>
    </ligand>
</feature>
<feature type="modified residue" description="Phosphohistidine; by HPr" evidence="1">
    <location>
        <position position="232"/>
    </location>
</feature>
<accession>A5VKE8</accession>
<comment type="function">
    <text evidence="1">Key enzyme in the regulation of glycerol uptake and metabolism. Catalyzes the phosphorylation of glycerol to yield sn-glycerol 3-phosphate.</text>
</comment>
<comment type="catalytic activity">
    <reaction evidence="1">
        <text>glycerol + ATP = sn-glycerol 3-phosphate + ADP + H(+)</text>
        <dbReference type="Rhea" id="RHEA:21644"/>
        <dbReference type="ChEBI" id="CHEBI:15378"/>
        <dbReference type="ChEBI" id="CHEBI:17754"/>
        <dbReference type="ChEBI" id="CHEBI:30616"/>
        <dbReference type="ChEBI" id="CHEBI:57597"/>
        <dbReference type="ChEBI" id="CHEBI:456216"/>
        <dbReference type="EC" id="2.7.1.30"/>
    </reaction>
</comment>
<comment type="activity regulation">
    <text evidence="1">Activated by phosphorylation and inhibited by fructose 1,6-bisphosphate (FBP).</text>
</comment>
<comment type="pathway">
    <text evidence="1">Polyol metabolism; glycerol degradation via glycerol kinase pathway; sn-glycerol 3-phosphate from glycerol: step 1/1.</text>
</comment>
<comment type="subunit">
    <text evidence="1">Homotetramer and homodimer (in equilibrium).</text>
</comment>
<comment type="PTM">
    <text evidence="1">The phosphoenolpyruvate-dependent sugar phosphotransferase system (PTS), including enzyme I, and histidine-containing protein (HPr) are required for the phosphorylation, which leads to the activation of the enzyme.</text>
</comment>
<comment type="similarity">
    <text evidence="1">Belongs to the FGGY kinase family.</text>
</comment>
<name>GLPK_LIMRD</name>
<sequence>MSEQQYIMAIDQGTTSSRAIIFDHDGNKVAISQQEFPQYFPQPGWVEHDPLEIWDSVQSVISNVMIKSQIKPYKIAAIGITNQRETTVIWDRHTGKPIYNAIVWQSKQTSDIAEQLIKDGYKDMIHQKTGLVIDSYFAATKIKWILDHVPGAREKAAKGDLMFGTIDTWLLWNLSGRRVHATDVTNASRTMLFNIHTLDWDQDILDLLDIPQSLLPVVKPSSAIYGYTGDYHFYGVQIPIAGIAGDQQAALFGQAAYDKGSIKNTYGTGAFIVMNTGLKPTLSDNGLLTTIAYGLDGQTHYALEGSIFVAGSAVQWLRDGLKMFDKASESEQMAVDAKTTGGVYVVPAFTGLGAPYWDQEVRGAMFGLTRGTERGHIIRATLEAIAYQTKDVVDTMVKDTQLPLTALTVNGGASRNNFMMQFQADILQTPIKRAAMEETTALGAAFLAGLAVDFWEDQDELRKLSRIGDQFDPQMDPQKAADLYRGWQRAIAAAQFYGKD</sequence>
<gene>
    <name evidence="1" type="primary">glpK</name>
    <name type="ordered locus">Lreu_1065</name>
</gene>
<dbReference type="EC" id="2.7.1.30" evidence="1"/>
<dbReference type="EMBL" id="CP000705">
    <property type="protein sequence ID" value="ABQ83322.1"/>
    <property type="molecule type" value="Genomic_DNA"/>
</dbReference>
<dbReference type="RefSeq" id="WP_003667028.1">
    <property type="nucleotide sequence ID" value="NC_009513.1"/>
</dbReference>
<dbReference type="SMR" id="A5VKE8"/>
<dbReference type="STRING" id="557436.Lreu_1065"/>
<dbReference type="KEGG" id="lre:Lreu_1065"/>
<dbReference type="PATRIC" id="fig|557436.17.peg.1615"/>
<dbReference type="eggNOG" id="COG0554">
    <property type="taxonomic scope" value="Bacteria"/>
</dbReference>
<dbReference type="HOGENOM" id="CLU_009281_2_3_9"/>
<dbReference type="UniPathway" id="UPA00618">
    <property type="reaction ID" value="UER00672"/>
</dbReference>
<dbReference type="Proteomes" id="UP000001991">
    <property type="component" value="Chromosome"/>
</dbReference>
<dbReference type="GO" id="GO:0005829">
    <property type="term" value="C:cytosol"/>
    <property type="evidence" value="ECO:0007669"/>
    <property type="project" value="TreeGrafter"/>
</dbReference>
<dbReference type="GO" id="GO:0005524">
    <property type="term" value="F:ATP binding"/>
    <property type="evidence" value="ECO:0007669"/>
    <property type="project" value="UniProtKB-UniRule"/>
</dbReference>
<dbReference type="GO" id="GO:0004370">
    <property type="term" value="F:glycerol kinase activity"/>
    <property type="evidence" value="ECO:0000250"/>
    <property type="project" value="UniProtKB"/>
</dbReference>
<dbReference type="GO" id="GO:0019563">
    <property type="term" value="P:glycerol catabolic process"/>
    <property type="evidence" value="ECO:0007669"/>
    <property type="project" value="UniProtKB-UniRule"/>
</dbReference>
<dbReference type="GO" id="GO:0006071">
    <property type="term" value="P:glycerol metabolic process"/>
    <property type="evidence" value="ECO:0000250"/>
    <property type="project" value="UniProtKB"/>
</dbReference>
<dbReference type="GO" id="GO:0006072">
    <property type="term" value="P:glycerol-3-phosphate metabolic process"/>
    <property type="evidence" value="ECO:0007669"/>
    <property type="project" value="InterPro"/>
</dbReference>
<dbReference type="CDD" id="cd07769">
    <property type="entry name" value="ASKHA_NBD_FGGY_GK"/>
    <property type="match status" value="1"/>
</dbReference>
<dbReference type="FunFam" id="3.30.420.40:FF:000007">
    <property type="entry name" value="Glycerol kinase"/>
    <property type="match status" value="1"/>
</dbReference>
<dbReference type="FunFam" id="3.30.420.40:FF:000008">
    <property type="entry name" value="Glycerol kinase"/>
    <property type="match status" value="1"/>
</dbReference>
<dbReference type="Gene3D" id="3.30.420.40">
    <property type="match status" value="2"/>
</dbReference>
<dbReference type="HAMAP" id="MF_00186">
    <property type="entry name" value="Glycerol_kin"/>
    <property type="match status" value="1"/>
</dbReference>
<dbReference type="InterPro" id="IPR043129">
    <property type="entry name" value="ATPase_NBD"/>
</dbReference>
<dbReference type="InterPro" id="IPR000577">
    <property type="entry name" value="Carb_kinase_FGGY"/>
</dbReference>
<dbReference type="InterPro" id="IPR018483">
    <property type="entry name" value="Carb_kinase_FGGY_CS"/>
</dbReference>
<dbReference type="InterPro" id="IPR018485">
    <property type="entry name" value="FGGY_C"/>
</dbReference>
<dbReference type="InterPro" id="IPR018484">
    <property type="entry name" value="FGGY_N"/>
</dbReference>
<dbReference type="InterPro" id="IPR005999">
    <property type="entry name" value="Glycerol_kin"/>
</dbReference>
<dbReference type="NCBIfam" id="TIGR01311">
    <property type="entry name" value="glycerol_kin"/>
    <property type="match status" value="1"/>
</dbReference>
<dbReference type="NCBIfam" id="NF000756">
    <property type="entry name" value="PRK00047.1"/>
    <property type="match status" value="1"/>
</dbReference>
<dbReference type="PANTHER" id="PTHR10196:SF69">
    <property type="entry name" value="GLYCEROL KINASE"/>
    <property type="match status" value="1"/>
</dbReference>
<dbReference type="PANTHER" id="PTHR10196">
    <property type="entry name" value="SUGAR KINASE"/>
    <property type="match status" value="1"/>
</dbReference>
<dbReference type="Pfam" id="PF02782">
    <property type="entry name" value="FGGY_C"/>
    <property type="match status" value="1"/>
</dbReference>
<dbReference type="Pfam" id="PF00370">
    <property type="entry name" value="FGGY_N"/>
    <property type="match status" value="1"/>
</dbReference>
<dbReference type="PIRSF" id="PIRSF000538">
    <property type="entry name" value="GlpK"/>
    <property type="match status" value="1"/>
</dbReference>
<dbReference type="SUPFAM" id="SSF53067">
    <property type="entry name" value="Actin-like ATPase domain"/>
    <property type="match status" value="2"/>
</dbReference>
<dbReference type="PROSITE" id="PS00445">
    <property type="entry name" value="FGGY_KINASES_2"/>
    <property type="match status" value="1"/>
</dbReference>
<keyword id="KW-0067">ATP-binding</keyword>
<keyword id="KW-0319">Glycerol metabolism</keyword>
<keyword id="KW-0418">Kinase</keyword>
<keyword id="KW-0547">Nucleotide-binding</keyword>
<keyword id="KW-0597">Phosphoprotein</keyword>
<keyword id="KW-1185">Reference proteome</keyword>
<keyword id="KW-0808">Transferase</keyword>
<proteinExistence type="inferred from homology"/>
<evidence type="ECO:0000255" key="1">
    <source>
        <dbReference type="HAMAP-Rule" id="MF_00186"/>
    </source>
</evidence>
<protein>
    <recommendedName>
        <fullName evidence="1">Glycerol kinase</fullName>
        <ecNumber evidence="1">2.7.1.30</ecNumber>
    </recommendedName>
    <alternativeName>
        <fullName evidence="1">ATP:glycerol 3-phosphotransferase</fullName>
    </alternativeName>
    <alternativeName>
        <fullName evidence="1">Glycerokinase</fullName>
        <shortName evidence="1">GK</shortName>
    </alternativeName>
</protein>